<feature type="chain" id="PRO_0000410366" description="High osmolarity signaling protein SHO1">
    <location>
        <begin position="1"/>
        <end position="353"/>
    </location>
</feature>
<feature type="topological domain" description="Cytoplasmic" evidence="2">
    <location>
        <begin position="1"/>
        <end position="29"/>
    </location>
</feature>
<feature type="transmembrane region" description="Helical" evidence="2">
    <location>
        <begin position="30"/>
        <end position="50"/>
    </location>
</feature>
<feature type="topological domain" description="Extracellular" evidence="2">
    <location>
        <begin position="51"/>
        <end position="60"/>
    </location>
</feature>
<feature type="transmembrane region" description="Helical" evidence="2">
    <location>
        <begin position="61"/>
        <end position="81"/>
    </location>
</feature>
<feature type="topological domain" description="Cytoplasmic" evidence="2">
    <location>
        <begin position="82"/>
        <end position="90"/>
    </location>
</feature>
<feature type="transmembrane region" description="Helical" evidence="2">
    <location>
        <begin position="91"/>
        <end position="111"/>
    </location>
</feature>
<feature type="topological domain" description="Extracellular" evidence="2">
    <location>
        <begin position="112"/>
        <end position="118"/>
    </location>
</feature>
<feature type="transmembrane region" description="Helical" evidence="2">
    <location>
        <begin position="119"/>
        <end position="139"/>
    </location>
</feature>
<feature type="topological domain" description="Cytoplasmic" evidence="2">
    <location>
        <begin position="140"/>
        <end position="353"/>
    </location>
</feature>
<feature type="domain" description="SH3" evidence="3">
    <location>
        <begin position="288"/>
        <end position="349"/>
    </location>
</feature>
<organism>
    <name type="scientific">Candida glabrata (strain ATCC 2001 / BCRC 20586 / JCM 3761 / NBRC 0622 / NRRL Y-65 / CBS 138)</name>
    <name type="common">Yeast</name>
    <name type="synonym">Nakaseomyces glabratus</name>
    <dbReference type="NCBI Taxonomy" id="284593"/>
    <lineage>
        <taxon>Eukaryota</taxon>
        <taxon>Fungi</taxon>
        <taxon>Dikarya</taxon>
        <taxon>Ascomycota</taxon>
        <taxon>Saccharomycotina</taxon>
        <taxon>Saccharomycetes</taxon>
        <taxon>Saccharomycetales</taxon>
        <taxon>Saccharomycetaceae</taxon>
        <taxon>Nakaseomyces</taxon>
    </lineage>
</organism>
<accession>Q6FTC4</accession>
<sequence length="353" mass="39044">MSGRRGKIINPRTRGAVRNVGFRNLISDPFAISSILIGLISWVITLGGCISVQVNEDFPRFTWWGIAFQFLIILMLIGFYIYDLVDYYRNFLTASIGVAFVYSTNSANYLIYGSGNQKAAASAGVVLLSMVNLIWIFYYGGDNASPINRWVDSFSLNGIRPSPFEAAKIKAYRRSSKQTQFRGSSVKLTHSTNNLHSASENLGLDNGFYNNPHTSNYVSSTALTEFENTGPPYPSASDLPTNNNAPLRSPQLGNNTIGDTYITATTNNNTNTTMGDTMGLYADLADESFPYRVKALYSYEADSADAYEMSFEQGEILMVSDIEGRWWKAKKESGETGIIPSNYVTIIDNDTEA</sequence>
<protein>
    <recommendedName>
        <fullName>High osmolarity signaling protein SHO1</fullName>
    </recommendedName>
    <alternativeName>
        <fullName>Osmosensor SHO1</fullName>
    </alternativeName>
</protein>
<gene>
    <name type="primary">SHO1</name>
    <name type="ordered locus">CAGL0G03597g</name>
</gene>
<name>SHO1_CANGA</name>
<reference key="1">
    <citation type="journal article" date="2004" name="Nature">
        <title>Genome evolution in yeasts.</title>
        <authorList>
            <person name="Dujon B."/>
            <person name="Sherman D."/>
            <person name="Fischer G."/>
            <person name="Durrens P."/>
            <person name="Casaregola S."/>
            <person name="Lafontaine I."/>
            <person name="de Montigny J."/>
            <person name="Marck C."/>
            <person name="Neuveglise C."/>
            <person name="Talla E."/>
            <person name="Goffard N."/>
            <person name="Frangeul L."/>
            <person name="Aigle M."/>
            <person name="Anthouard V."/>
            <person name="Babour A."/>
            <person name="Barbe V."/>
            <person name="Barnay S."/>
            <person name="Blanchin S."/>
            <person name="Beckerich J.-M."/>
            <person name="Beyne E."/>
            <person name="Bleykasten C."/>
            <person name="Boisrame A."/>
            <person name="Boyer J."/>
            <person name="Cattolico L."/>
            <person name="Confanioleri F."/>
            <person name="de Daruvar A."/>
            <person name="Despons L."/>
            <person name="Fabre E."/>
            <person name="Fairhead C."/>
            <person name="Ferry-Dumazet H."/>
            <person name="Groppi A."/>
            <person name="Hantraye F."/>
            <person name="Hennequin C."/>
            <person name="Jauniaux N."/>
            <person name="Joyet P."/>
            <person name="Kachouri R."/>
            <person name="Kerrest A."/>
            <person name="Koszul R."/>
            <person name="Lemaire M."/>
            <person name="Lesur I."/>
            <person name="Ma L."/>
            <person name="Muller H."/>
            <person name="Nicaud J.-M."/>
            <person name="Nikolski M."/>
            <person name="Oztas S."/>
            <person name="Ozier-Kalogeropoulos O."/>
            <person name="Pellenz S."/>
            <person name="Potier S."/>
            <person name="Richard G.-F."/>
            <person name="Straub M.-L."/>
            <person name="Suleau A."/>
            <person name="Swennen D."/>
            <person name="Tekaia F."/>
            <person name="Wesolowski-Louvel M."/>
            <person name="Westhof E."/>
            <person name="Wirth B."/>
            <person name="Zeniou-Meyer M."/>
            <person name="Zivanovic Y."/>
            <person name="Bolotin-Fukuhara M."/>
            <person name="Thierry A."/>
            <person name="Bouchier C."/>
            <person name="Caudron B."/>
            <person name="Scarpelli C."/>
            <person name="Gaillardin C."/>
            <person name="Weissenbach J."/>
            <person name="Wincker P."/>
            <person name="Souciet J.-L."/>
        </authorList>
    </citation>
    <scope>NUCLEOTIDE SEQUENCE [LARGE SCALE GENOMIC DNA]</scope>
    <source>
        <strain>ATCC 2001 / BCRC 20586 / JCM 3761 / NBRC 0622 / NRRL Y-65 / CBS 138</strain>
    </source>
</reference>
<reference key="2">
    <citation type="journal article" date="2007" name="Eukaryot. Cell">
        <title>The high-osmolarity glycerol response pathway in the human fungal pathogen Candida glabrata strain ATCC 2001 lacks a signaling branch that operates in baker's yeast.</title>
        <authorList>
            <person name="Gregori C."/>
            <person name="Schuller C."/>
            <person name="Roetzer A."/>
            <person name="Schwarzmuller T."/>
            <person name="Ammerer G."/>
            <person name="Kuchler K."/>
        </authorList>
    </citation>
    <scope>FUNCTION</scope>
</reference>
<dbReference type="EMBL" id="CR380953">
    <property type="protein sequence ID" value="CAG59447.1"/>
    <property type="molecule type" value="Genomic_DNA"/>
</dbReference>
<dbReference type="RefSeq" id="XP_446520.1">
    <property type="nucleotide sequence ID" value="XM_446520.1"/>
</dbReference>
<dbReference type="SMR" id="Q6FTC4"/>
<dbReference type="FunCoup" id="Q6FTC4">
    <property type="interactions" value="215"/>
</dbReference>
<dbReference type="STRING" id="284593.Q6FTC4"/>
<dbReference type="EnsemblFungi" id="CAGL0G03597g-T">
    <property type="protein sequence ID" value="CAGL0G03597g-T-p1"/>
    <property type="gene ID" value="CAGL0G03597g"/>
</dbReference>
<dbReference type="GeneID" id="2888306"/>
<dbReference type="KEGG" id="cgr:2888306"/>
<dbReference type="CGD" id="CAL0130504">
    <property type="gene designation" value="SHO1"/>
</dbReference>
<dbReference type="VEuPathDB" id="FungiDB:B1J91_G03597g"/>
<dbReference type="VEuPathDB" id="FungiDB:CAGL0G03597g"/>
<dbReference type="eggNOG" id="ENOG502QW7A">
    <property type="taxonomic scope" value="Eukaryota"/>
</dbReference>
<dbReference type="HOGENOM" id="CLU_043316_0_0_1"/>
<dbReference type="InParanoid" id="Q6FTC4"/>
<dbReference type="Proteomes" id="UP000002428">
    <property type="component" value="Chromosome G"/>
</dbReference>
<dbReference type="GO" id="GO:0005886">
    <property type="term" value="C:plasma membrane"/>
    <property type="evidence" value="ECO:0007669"/>
    <property type="project" value="UniProtKB-SubCell"/>
</dbReference>
<dbReference type="CDD" id="cd11855">
    <property type="entry name" value="SH3_Sho1p"/>
    <property type="match status" value="1"/>
</dbReference>
<dbReference type="FunFam" id="2.30.30.40:FF:000213">
    <property type="entry name" value="High osmolarity signaling protein SHO1"/>
    <property type="match status" value="1"/>
</dbReference>
<dbReference type="Gene3D" id="2.30.30.40">
    <property type="entry name" value="SH3 Domains"/>
    <property type="match status" value="1"/>
</dbReference>
<dbReference type="InterPro" id="IPR036028">
    <property type="entry name" value="SH3-like_dom_sf"/>
</dbReference>
<dbReference type="InterPro" id="IPR001452">
    <property type="entry name" value="SH3_domain"/>
</dbReference>
<dbReference type="InterPro" id="IPR035522">
    <property type="entry name" value="Sho1_SH3"/>
</dbReference>
<dbReference type="Pfam" id="PF00018">
    <property type="entry name" value="SH3_1"/>
    <property type="match status" value="1"/>
</dbReference>
<dbReference type="PRINTS" id="PR00452">
    <property type="entry name" value="SH3DOMAIN"/>
</dbReference>
<dbReference type="SMART" id="SM00326">
    <property type="entry name" value="SH3"/>
    <property type="match status" value="1"/>
</dbReference>
<dbReference type="SUPFAM" id="SSF50044">
    <property type="entry name" value="SH3-domain"/>
    <property type="match status" value="1"/>
</dbReference>
<dbReference type="PROSITE" id="PS50002">
    <property type="entry name" value="SH3"/>
    <property type="match status" value="1"/>
</dbReference>
<proteinExistence type="inferred from homology"/>
<keyword id="KW-1003">Cell membrane</keyword>
<keyword id="KW-0472">Membrane</keyword>
<keyword id="KW-1185">Reference proteome</keyword>
<keyword id="KW-0728">SH3 domain</keyword>
<keyword id="KW-0346">Stress response</keyword>
<keyword id="KW-0812">Transmembrane</keyword>
<keyword id="KW-1133">Transmembrane helix</keyword>
<evidence type="ECO:0000250" key="1"/>
<evidence type="ECO:0000255" key="2"/>
<evidence type="ECO:0000255" key="3">
    <source>
        <dbReference type="PROSITE-ProRule" id="PRU00192"/>
    </source>
</evidence>
<evidence type="ECO:0000269" key="4">
    <source>
    </source>
</evidence>
<evidence type="ECO:0000305" key="5"/>
<comment type="function">
    <text evidence="4">Plasma membrane osmosensor that activates the high osmolarity glycerol (HOG) MAPK signaling pathway in response to high osmolarity.</text>
</comment>
<comment type="subunit">
    <text evidence="1">Forms homooligomers.</text>
</comment>
<comment type="subcellular location">
    <subcellularLocation>
        <location evidence="1">Cell membrane</location>
        <topology evidence="1">Multi-pass membrane protein</topology>
    </subcellularLocation>
</comment>
<comment type="similarity">
    <text evidence="5">Belongs to the SHO1 family.</text>
</comment>